<organism>
    <name type="scientific">Danio rerio</name>
    <name type="common">Zebrafish</name>
    <name type="synonym">Brachydanio rerio</name>
    <dbReference type="NCBI Taxonomy" id="7955"/>
    <lineage>
        <taxon>Eukaryota</taxon>
        <taxon>Metazoa</taxon>
        <taxon>Chordata</taxon>
        <taxon>Craniata</taxon>
        <taxon>Vertebrata</taxon>
        <taxon>Euteleostomi</taxon>
        <taxon>Actinopterygii</taxon>
        <taxon>Neopterygii</taxon>
        <taxon>Teleostei</taxon>
        <taxon>Ostariophysi</taxon>
        <taxon>Cypriniformes</taxon>
        <taxon>Danionidae</taxon>
        <taxon>Danioninae</taxon>
        <taxon>Danio</taxon>
    </lineage>
</organism>
<gene>
    <name type="primary">maf</name>
</gene>
<feature type="chain" id="PRO_0000364083" description="Transcription factor Maf">
    <location>
        <begin position="1"/>
        <end position="327"/>
    </location>
</feature>
<feature type="domain" description="bZIP" evidence="2">
    <location>
        <begin position="241"/>
        <end position="304"/>
    </location>
</feature>
<feature type="region of interest" description="Disordered" evidence="3">
    <location>
        <begin position="54"/>
        <end position="84"/>
    </location>
</feature>
<feature type="region of interest" description="Disordered" evidence="3">
    <location>
        <begin position="167"/>
        <end position="209"/>
    </location>
</feature>
<feature type="region of interest" description="Basic motif" evidence="2">
    <location>
        <begin position="241"/>
        <end position="266"/>
    </location>
</feature>
<feature type="region of interest" description="Leucine-zipper" evidence="2">
    <location>
        <begin position="269"/>
        <end position="290"/>
    </location>
</feature>
<feature type="region of interest" description="Disordered" evidence="3">
    <location>
        <begin position="308"/>
        <end position="327"/>
    </location>
</feature>
<feature type="compositionally biased region" description="Low complexity" evidence="3">
    <location>
        <begin position="54"/>
        <end position="65"/>
    </location>
</feature>
<feature type="compositionally biased region" description="Low complexity" evidence="3">
    <location>
        <begin position="72"/>
        <end position="82"/>
    </location>
</feature>
<feature type="compositionally biased region" description="Basic residues" evidence="3">
    <location>
        <begin position="172"/>
        <end position="191"/>
    </location>
</feature>
<feature type="compositionally biased region" description="Low complexity" evidence="3">
    <location>
        <begin position="314"/>
        <end position="327"/>
    </location>
</feature>
<keyword id="KW-0010">Activator</keyword>
<keyword id="KW-0238">DNA-binding</keyword>
<keyword id="KW-0539">Nucleus</keyword>
<keyword id="KW-1185">Reference proteome</keyword>
<keyword id="KW-0678">Repressor</keyword>
<keyword id="KW-0804">Transcription</keyword>
<keyword id="KW-0805">Transcription regulation</keyword>
<dbReference type="EMBL" id="AB006323">
    <property type="protein sequence ID" value="BAB21103.2"/>
    <property type="molecule type" value="mRNA"/>
</dbReference>
<dbReference type="RefSeq" id="NP_001303598.1">
    <property type="nucleotide sequence ID" value="NM_001316669.1"/>
</dbReference>
<dbReference type="SMR" id="Q98UK4"/>
<dbReference type="FunCoup" id="Q98UK4">
    <property type="interactions" value="648"/>
</dbReference>
<dbReference type="STRING" id="7955.ENSDARP00000101942"/>
<dbReference type="GeneID" id="100537332"/>
<dbReference type="KEGG" id="dre:100537332"/>
<dbReference type="AGR" id="ZFIN:ZDB-GENE-141211-38"/>
<dbReference type="CTD" id="9935"/>
<dbReference type="ZFIN" id="ZDB-GENE-141211-38">
    <property type="gene designation" value="mafb"/>
</dbReference>
<dbReference type="InParanoid" id="Q98UK4"/>
<dbReference type="OrthoDB" id="5974330at2759"/>
<dbReference type="PhylomeDB" id="Q98UK4"/>
<dbReference type="PRO" id="PR:Q98UK4"/>
<dbReference type="Proteomes" id="UP000000437">
    <property type="component" value="Chromosome 25"/>
</dbReference>
<dbReference type="GO" id="GO:0005634">
    <property type="term" value="C:nucleus"/>
    <property type="evidence" value="ECO:0000318"/>
    <property type="project" value="GO_Central"/>
</dbReference>
<dbReference type="GO" id="GO:0000981">
    <property type="term" value="F:DNA-binding transcription factor activity, RNA polymerase II-specific"/>
    <property type="evidence" value="ECO:0000318"/>
    <property type="project" value="GO_Central"/>
</dbReference>
<dbReference type="GO" id="GO:0000978">
    <property type="term" value="F:RNA polymerase II cis-regulatory region sequence-specific DNA binding"/>
    <property type="evidence" value="ECO:0000318"/>
    <property type="project" value="GO_Central"/>
</dbReference>
<dbReference type="GO" id="GO:0006357">
    <property type="term" value="P:regulation of transcription by RNA polymerase II"/>
    <property type="evidence" value="ECO:0000318"/>
    <property type="project" value="GO_Central"/>
</dbReference>
<dbReference type="CDD" id="cd14718">
    <property type="entry name" value="bZIP_Maf_large"/>
    <property type="match status" value="1"/>
</dbReference>
<dbReference type="FunFam" id="1.20.5.170:FF:000016">
    <property type="entry name" value="MAF bZIP transcription factor"/>
    <property type="match status" value="1"/>
</dbReference>
<dbReference type="Gene3D" id="1.20.5.170">
    <property type="match status" value="1"/>
</dbReference>
<dbReference type="InterPro" id="IPR004827">
    <property type="entry name" value="bZIP"/>
</dbReference>
<dbReference type="InterPro" id="IPR004826">
    <property type="entry name" value="bZIP_Maf"/>
</dbReference>
<dbReference type="InterPro" id="IPR046347">
    <property type="entry name" value="bZIP_sf"/>
</dbReference>
<dbReference type="InterPro" id="IPR013592">
    <property type="entry name" value="Maf_TF_N"/>
</dbReference>
<dbReference type="InterPro" id="IPR008917">
    <property type="entry name" value="TF_DNA-bd_sf"/>
</dbReference>
<dbReference type="InterPro" id="IPR024874">
    <property type="entry name" value="Transcription_factor_Maf_fam"/>
</dbReference>
<dbReference type="PANTHER" id="PTHR10129">
    <property type="entry name" value="TRANSCRIPTION FACTOR MAF"/>
    <property type="match status" value="1"/>
</dbReference>
<dbReference type="PANTHER" id="PTHR10129:SF9">
    <property type="entry name" value="TRANSCRIPTION FACTOR MAF"/>
    <property type="match status" value="1"/>
</dbReference>
<dbReference type="Pfam" id="PF03131">
    <property type="entry name" value="bZIP_Maf"/>
    <property type="match status" value="1"/>
</dbReference>
<dbReference type="Pfam" id="PF08383">
    <property type="entry name" value="Maf_N"/>
    <property type="match status" value="1"/>
</dbReference>
<dbReference type="SMART" id="SM00338">
    <property type="entry name" value="BRLZ"/>
    <property type="match status" value="1"/>
</dbReference>
<dbReference type="SUPFAM" id="SSF47454">
    <property type="entry name" value="A DNA-binding domain in eukaryotic transcription factors"/>
    <property type="match status" value="1"/>
</dbReference>
<dbReference type="SUPFAM" id="SSF57959">
    <property type="entry name" value="Leucine zipper domain"/>
    <property type="match status" value="1"/>
</dbReference>
<dbReference type="PROSITE" id="PS50217">
    <property type="entry name" value="BZIP"/>
    <property type="match status" value="1"/>
</dbReference>
<sequence length="327" mass="35825">MASELAMSSSDLPTSPLAMEYVNDFDLMKFEVKKEPVEPDRSISQCSRLIAGGSLSSTPMSTPCSSVPPSPSFSAPSPGSGSEQKAHLEDFYWMTGYQQQLNPEALGFSPEDAVEALISSSHQLQSFDGYARGQQFGSAAGAGGAMAGEEMGSAAAVVSAVIAAAAAQNGAPHHHHHHHHHHPAGHHHHHAAPGAQSNGASAGHPGHMHLDERFSDEQLVNMSVRELNRQLRGVSKEEVIRLKQKRRTLKNRGYAQSCRYKRVQQRHVLEGEKTQLMQQVDHLKQEISRLVRERDAYKEKYEKLISSGFRENGSSSDNNPSSPEFFM</sequence>
<reference key="1">
    <citation type="journal article" date="2001" name="J. Biochem.">
        <title>Isolation, characterization, and expression analysis of zebrafish large Mafs.</title>
        <authorList>
            <person name="Kajihara M."/>
            <person name="Kawauchi S."/>
            <person name="Kobayashi M."/>
            <person name="Ogino H."/>
            <person name="Takahashi S."/>
            <person name="Yasuda K."/>
        </authorList>
    </citation>
    <scope>NUCLEOTIDE SEQUENCE [MRNA]</scope>
    <scope>DEVELOPMENTAL STAGE</scope>
</reference>
<protein>
    <recommendedName>
        <fullName>Transcription factor Maf</fullName>
    </recommendedName>
</protein>
<comment type="function">
    <text evidence="1">Acts as a transcriptional activator or repressor.</text>
</comment>
<comment type="subunit">
    <text evidence="1">Homodimer or heterodimer. Binds DNA as a homodimer or a heterodimer (By similarity).</text>
</comment>
<comment type="subcellular location">
    <subcellularLocation>
        <location evidence="2">Nucleus</location>
    </subcellularLocation>
</comment>
<comment type="developmental stage">
    <text evidence="4">Expressed in the lens fiber cells during embryogenesis. During somitogenesis expressed in somitic cells (at protein level).</text>
</comment>
<comment type="similarity">
    <text evidence="5">Belongs to the bZIP family. Maf subfamily.</text>
</comment>
<evidence type="ECO:0000250" key="1"/>
<evidence type="ECO:0000255" key="2">
    <source>
        <dbReference type="PROSITE-ProRule" id="PRU00978"/>
    </source>
</evidence>
<evidence type="ECO:0000256" key="3">
    <source>
        <dbReference type="SAM" id="MobiDB-lite"/>
    </source>
</evidence>
<evidence type="ECO:0000269" key="4">
    <source>
    </source>
</evidence>
<evidence type="ECO:0000305" key="5"/>
<name>MAF_DANRE</name>
<proteinExistence type="evidence at protein level"/>
<accession>Q98UK4</accession>